<name>RL11_CHLSY</name>
<keyword id="KW-0488">Methylation</keyword>
<keyword id="KW-0687">Ribonucleoprotein</keyword>
<keyword id="KW-0689">Ribosomal protein</keyword>
<keyword id="KW-0694">RNA-binding</keyword>
<keyword id="KW-0699">rRNA-binding</keyword>
<reference key="1">
    <citation type="submission" date="2009-01" db="EMBL/GenBank/DDBJ databases">
        <title>Complete sequence of Chloroflexus sp. Y-400-fl.</title>
        <authorList>
            <consortium name="US DOE Joint Genome Institute"/>
            <person name="Lucas S."/>
            <person name="Copeland A."/>
            <person name="Lapidus A."/>
            <person name="Glavina del Rio T."/>
            <person name="Dalin E."/>
            <person name="Tice H."/>
            <person name="Bruce D."/>
            <person name="Goodwin L."/>
            <person name="Pitluck S."/>
            <person name="Sims D."/>
            <person name="Kiss H."/>
            <person name="Brettin T."/>
            <person name="Detter J.C."/>
            <person name="Han C."/>
            <person name="Larimer F."/>
            <person name="Land M."/>
            <person name="Hauser L."/>
            <person name="Kyrpides N."/>
            <person name="Ovchinnikova G."/>
            <person name="Bryant D.A."/>
            <person name="Richardson P."/>
        </authorList>
    </citation>
    <scope>NUCLEOTIDE SEQUENCE [LARGE SCALE GENOMIC DNA]</scope>
    <source>
        <strain>ATCC 29364 / DSM 637 / Y-400-fl</strain>
    </source>
</reference>
<sequence>MAKKLVAVVKLQLPAGKATPAPPVGPALGQYGINIMAFVKEYNEKSASQAGSIVPVEISVYSDRSFVARLLTPPAADLLRKAAGIQKGASTPKRTTVGTITRAQLRQIAQQKLPDMNANDIEAAERIIAGTARSMGIKIVE</sequence>
<dbReference type="EMBL" id="CP001364">
    <property type="protein sequence ID" value="ACM53749.1"/>
    <property type="molecule type" value="Genomic_DNA"/>
</dbReference>
<dbReference type="SMR" id="B9LI29"/>
<dbReference type="KEGG" id="chl:Chy400_2354"/>
<dbReference type="HOGENOM" id="CLU_074237_2_2_0"/>
<dbReference type="OrthoDB" id="9802408at2"/>
<dbReference type="GO" id="GO:0022625">
    <property type="term" value="C:cytosolic large ribosomal subunit"/>
    <property type="evidence" value="ECO:0007669"/>
    <property type="project" value="TreeGrafter"/>
</dbReference>
<dbReference type="GO" id="GO:0070180">
    <property type="term" value="F:large ribosomal subunit rRNA binding"/>
    <property type="evidence" value="ECO:0007669"/>
    <property type="project" value="UniProtKB-UniRule"/>
</dbReference>
<dbReference type="GO" id="GO:0003735">
    <property type="term" value="F:structural constituent of ribosome"/>
    <property type="evidence" value="ECO:0007669"/>
    <property type="project" value="InterPro"/>
</dbReference>
<dbReference type="GO" id="GO:0006412">
    <property type="term" value="P:translation"/>
    <property type="evidence" value="ECO:0007669"/>
    <property type="project" value="UniProtKB-UniRule"/>
</dbReference>
<dbReference type="CDD" id="cd00349">
    <property type="entry name" value="Ribosomal_L11"/>
    <property type="match status" value="1"/>
</dbReference>
<dbReference type="FunFam" id="1.10.10.250:FF:000001">
    <property type="entry name" value="50S ribosomal protein L11"/>
    <property type="match status" value="1"/>
</dbReference>
<dbReference type="FunFam" id="3.30.1550.10:FF:000005">
    <property type="entry name" value="50S ribosomal protein L11"/>
    <property type="match status" value="1"/>
</dbReference>
<dbReference type="Gene3D" id="1.10.10.250">
    <property type="entry name" value="Ribosomal protein L11, C-terminal domain"/>
    <property type="match status" value="1"/>
</dbReference>
<dbReference type="Gene3D" id="3.30.1550.10">
    <property type="entry name" value="Ribosomal protein L11/L12, N-terminal domain"/>
    <property type="match status" value="1"/>
</dbReference>
<dbReference type="HAMAP" id="MF_00736">
    <property type="entry name" value="Ribosomal_uL11"/>
    <property type="match status" value="1"/>
</dbReference>
<dbReference type="InterPro" id="IPR000911">
    <property type="entry name" value="Ribosomal_uL11"/>
</dbReference>
<dbReference type="InterPro" id="IPR006519">
    <property type="entry name" value="Ribosomal_uL11_bac-typ"/>
</dbReference>
<dbReference type="InterPro" id="IPR020783">
    <property type="entry name" value="Ribosomal_uL11_C"/>
</dbReference>
<dbReference type="InterPro" id="IPR036769">
    <property type="entry name" value="Ribosomal_uL11_C_sf"/>
</dbReference>
<dbReference type="InterPro" id="IPR020785">
    <property type="entry name" value="Ribosomal_uL11_CS"/>
</dbReference>
<dbReference type="InterPro" id="IPR020784">
    <property type="entry name" value="Ribosomal_uL11_N"/>
</dbReference>
<dbReference type="InterPro" id="IPR036796">
    <property type="entry name" value="Ribosomal_uL11_N_sf"/>
</dbReference>
<dbReference type="NCBIfam" id="TIGR01632">
    <property type="entry name" value="L11_bact"/>
    <property type="match status" value="1"/>
</dbReference>
<dbReference type="PANTHER" id="PTHR11661">
    <property type="entry name" value="60S RIBOSOMAL PROTEIN L12"/>
    <property type="match status" value="1"/>
</dbReference>
<dbReference type="PANTHER" id="PTHR11661:SF1">
    <property type="entry name" value="LARGE RIBOSOMAL SUBUNIT PROTEIN UL11M"/>
    <property type="match status" value="1"/>
</dbReference>
<dbReference type="Pfam" id="PF00298">
    <property type="entry name" value="Ribosomal_L11"/>
    <property type="match status" value="1"/>
</dbReference>
<dbReference type="Pfam" id="PF03946">
    <property type="entry name" value="Ribosomal_L11_N"/>
    <property type="match status" value="1"/>
</dbReference>
<dbReference type="SMART" id="SM00649">
    <property type="entry name" value="RL11"/>
    <property type="match status" value="1"/>
</dbReference>
<dbReference type="SUPFAM" id="SSF54747">
    <property type="entry name" value="Ribosomal L11/L12e N-terminal domain"/>
    <property type="match status" value="1"/>
</dbReference>
<dbReference type="SUPFAM" id="SSF46906">
    <property type="entry name" value="Ribosomal protein L11, C-terminal domain"/>
    <property type="match status" value="1"/>
</dbReference>
<dbReference type="PROSITE" id="PS00359">
    <property type="entry name" value="RIBOSOMAL_L11"/>
    <property type="match status" value="1"/>
</dbReference>
<protein>
    <recommendedName>
        <fullName evidence="1">Large ribosomal subunit protein uL11</fullName>
    </recommendedName>
    <alternativeName>
        <fullName evidence="2">50S ribosomal protein L11</fullName>
    </alternativeName>
</protein>
<gene>
    <name evidence="1" type="primary">rplK</name>
    <name type="ordered locus">Chy400_2354</name>
</gene>
<comment type="function">
    <text evidence="1">Forms part of the ribosomal stalk which helps the ribosome interact with GTP-bound translation factors.</text>
</comment>
<comment type="subunit">
    <text evidence="1">Part of the ribosomal stalk of the 50S ribosomal subunit. Interacts with L10 and the large rRNA to form the base of the stalk. L10 forms an elongated spine to which L12 dimers bind in a sequential fashion forming a multimeric L10(L12)X complex.</text>
</comment>
<comment type="PTM">
    <text evidence="1">One or more lysine residues are methylated.</text>
</comment>
<comment type="similarity">
    <text evidence="1">Belongs to the universal ribosomal protein uL11 family.</text>
</comment>
<proteinExistence type="inferred from homology"/>
<feature type="chain" id="PRO_1000195598" description="Large ribosomal subunit protein uL11">
    <location>
        <begin position="1"/>
        <end position="141"/>
    </location>
</feature>
<evidence type="ECO:0000255" key="1">
    <source>
        <dbReference type="HAMAP-Rule" id="MF_00736"/>
    </source>
</evidence>
<evidence type="ECO:0000305" key="2"/>
<accession>B9LI29</accession>
<organism>
    <name type="scientific">Chloroflexus aurantiacus (strain ATCC 29364 / DSM 637 / Y-400-fl)</name>
    <dbReference type="NCBI Taxonomy" id="480224"/>
    <lineage>
        <taxon>Bacteria</taxon>
        <taxon>Bacillati</taxon>
        <taxon>Chloroflexota</taxon>
        <taxon>Chloroflexia</taxon>
        <taxon>Chloroflexales</taxon>
        <taxon>Chloroflexineae</taxon>
        <taxon>Chloroflexaceae</taxon>
        <taxon>Chloroflexus</taxon>
    </lineage>
</organism>